<protein>
    <recommendedName>
        <fullName>Carbazole 1,9a-dioxygenase, terminal oxygenase component CarAa</fullName>
        <shortName>CARDO</shortName>
        <ecNumber>1.14.12.22</ecNumber>
    </recommendedName>
</protein>
<proteinExistence type="evidence at protein level"/>
<comment type="function">
    <text evidence="2 3">Part of the multicomponent carbazole 1,9a-dioxygenase (CARDO), that converts carbazole (CAR) into 2-aminobiphenyl-2,3-diol. Catalyzes the dioxygenation at the angular (C-9a) and adjacent (C-1) positions of carbazole to yield a highly unstable cis-hydrodiol intermediate which is spontaneously converted to 2-aminobiphenyl-2,3-diol. It is also able to attack the angular position adjacent of hetero atom of heterocyclic aromatic compounds such as polychlorinated dibenzo-p-dioxin (DD) and dibenzofuran (DBF). It was also shown that CARDO has the ability to metabolize biphenyl and polycyclic aromatic hydrocarbons, such as naphthalene and phenanthrene.</text>
</comment>
<comment type="catalytic activity">
    <reaction evidence="2">
        <text>9H-carbazole + NADH + O2 + H(+) = 2'-aminobiphenyl-2,3-diol + NAD(+)</text>
        <dbReference type="Rhea" id="RHEA:27838"/>
        <dbReference type="ChEBI" id="CHEBI:15378"/>
        <dbReference type="ChEBI" id="CHEBI:15379"/>
        <dbReference type="ChEBI" id="CHEBI:27543"/>
        <dbReference type="ChEBI" id="CHEBI:29010"/>
        <dbReference type="ChEBI" id="CHEBI:57540"/>
        <dbReference type="ChEBI" id="CHEBI:57945"/>
        <dbReference type="EC" id="1.14.12.22"/>
    </reaction>
</comment>
<comment type="catalytic activity">
    <reaction evidence="2">
        <text>9H-carbazole + NADPH + O2 + H(+) = 2'-aminobiphenyl-2,3-diol + NADP(+)</text>
        <dbReference type="Rhea" id="RHEA:27842"/>
        <dbReference type="ChEBI" id="CHEBI:15378"/>
        <dbReference type="ChEBI" id="CHEBI:15379"/>
        <dbReference type="ChEBI" id="CHEBI:27543"/>
        <dbReference type="ChEBI" id="CHEBI:29010"/>
        <dbReference type="ChEBI" id="CHEBI:57783"/>
        <dbReference type="ChEBI" id="CHEBI:58349"/>
        <dbReference type="EC" id="1.14.12.22"/>
    </reaction>
</comment>
<comment type="cofactor">
    <cofactor evidence="4">
        <name>[2Fe-2S] cluster</name>
        <dbReference type="ChEBI" id="CHEBI:190135"/>
    </cofactor>
    <text evidence="4">Binds 1 [2Fe-2S] cluster per subunit.</text>
</comment>
<comment type="biophysicochemical properties">
    <phDependence>
        <text evidence="2">Optimum pH is between 7 and 7.5.</text>
    </phDependence>
    <temperatureDependence>
        <text evidence="2">Optimum temperature is 30 degrees Celsius.</text>
    </temperatureDependence>
</comment>
<comment type="subunit">
    <text evidence="2">Homotrimer. Carbazole 1,9a-dioxygenase complex consists of a terminal oxygenase component CarAa, a ferredoxin reductase component CarAd and a ferredoxin component CarAc.</text>
</comment>
<gene>
    <name type="primary">carAa</name>
</gene>
<evidence type="ECO:0000255" key="1">
    <source>
        <dbReference type="PROSITE-ProRule" id="PRU00628"/>
    </source>
</evidence>
<evidence type="ECO:0000269" key="2">
    <source>
    </source>
</evidence>
<evidence type="ECO:0000269" key="3">
    <source>
    </source>
</evidence>
<evidence type="ECO:0000305" key="4"/>
<geneLocation type="plasmid">
    <name>pCAR1</name>
</geneLocation>
<accession>Q8G8B6</accession>
<keyword id="KW-0001">2Fe-2S</keyword>
<keyword id="KW-0223">Dioxygenase</keyword>
<keyword id="KW-0903">Direct protein sequencing</keyword>
<keyword id="KW-0408">Iron</keyword>
<keyword id="KW-0411">Iron-sulfur</keyword>
<keyword id="KW-0479">Metal-binding</keyword>
<keyword id="KW-0520">NAD</keyword>
<keyword id="KW-0521">NADP</keyword>
<keyword id="KW-0560">Oxidoreductase</keyword>
<keyword id="KW-0614">Plasmid</keyword>
<organism>
    <name type="scientific">Metapseudomonas resinovorans</name>
    <name type="common">Pseudomonas resinovorans</name>
    <dbReference type="NCBI Taxonomy" id="53412"/>
    <lineage>
        <taxon>Bacteria</taxon>
        <taxon>Pseudomonadati</taxon>
        <taxon>Pseudomonadota</taxon>
        <taxon>Gammaproteobacteria</taxon>
        <taxon>Pseudomonadales</taxon>
        <taxon>Pseudomonadaceae</taxon>
        <taxon>Metapseudomonas</taxon>
    </lineage>
</organism>
<sequence length="384" mass="43785">MANVDEAILKRVKGWAPYVDAKLGFRNHWYPVMFSKEIDEGEPKTLKLLGENLLVNRIDGKLYCLKDRCLHRGVQLSVKVECKTKSTITCWYHAWTYRWEDGVLCDILTNPTSAQIGRQKLKTYPVQEAKGCVFIYLGDGDPPPLARDTPPNFLDDDMEILGKNQIIKSNWRLAVENGFDPSHIYIHKDSILVKDNDLALPLGFAPGGDRKQQTRVVDDDVVGRKGVYDLIGEHGVPVFEGTIGGEVVREGAYGEKIVANDISIWLPGVLKVNPFPNPDMMQFEWYVPIDENTHYYFQTLGKPCANDEERKNYEQEFESKWKPMALEGFNNDDIWAREAMVDFYADDKGWVNEILFEVDEAIVAWRKLASEHNQGIQTQAHVSG</sequence>
<feature type="initiator methionine" description="Removed" evidence="2">
    <location>
        <position position="1"/>
    </location>
</feature>
<feature type="chain" id="PRO_0000419024" description="Carbazole 1,9a-dioxygenase, terminal oxygenase component CarAa">
    <location>
        <begin position="2"/>
        <end position="384"/>
    </location>
</feature>
<feature type="domain" description="Rieske" evidence="1">
    <location>
        <begin position="29"/>
        <end position="135"/>
    </location>
</feature>
<feature type="binding site" evidence="1">
    <location>
        <position position="69"/>
    </location>
    <ligand>
        <name>[2Fe-2S] cluster</name>
        <dbReference type="ChEBI" id="CHEBI:190135"/>
    </ligand>
</feature>
<feature type="binding site" evidence="1">
    <location>
        <position position="71"/>
    </location>
    <ligand>
        <name>[2Fe-2S] cluster</name>
        <dbReference type="ChEBI" id="CHEBI:190135"/>
    </ligand>
</feature>
<feature type="binding site" evidence="1">
    <location>
        <position position="90"/>
    </location>
    <ligand>
        <name>[2Fe-2S] cluster</name>
        <dbReference type="ChEBI" id="CHEBI:190135"/>
    </ligand>
</feature>
<feature type="binding site" evidence="1">
    <location>
        <position position="93"/>
    </location>
    <ligand>
        <name>[2Fe-2S] cluster</name>
        <dbReference type="ChEBI" id="CHEBI:190135"/>
    </ligand>
</feature>
<name>CARAA_METRE</name>
<reference key="1">
    <citation type="journal article" date="1997" name="J. Bacteriol.">
        <title>Cloning of genes involved in carbazole degradation of Pseudomonas sp. strain CA10: nucleotide sequences of genes and characterization of meta-cleavage enzymes and hydrolase.</title>
        <authorList>
            <person name="Sato S.I."/>
            <person name="Ouchiyama N."/>
            <person name="Kimura T."/>
            <person name="Nojiri H."/>
            <person name="Yamane H."/>
            <person name="Omori T."/>
        </authorList>
    </citation>
    <scope>NUCLEOTIDE SEQUENCE [GENOMIC DNA]</scope>
    <scope>NOMENCLATURE</scope>
    <source>
        <strain>CA10</strain>
    </source>
</reference>
<reference key="2">
    <citation type="journal article" date="1997" name="J. Bacteriol.">
        <title>Identification and characterization of genes encoding carbazole 1,9a-dioxygenase in Pseudomonas sp. strain CA10.</title>
        <authorList>
            <person name="Sato S.I."/>
            <person name="Nam J.W."/>
            <person name="Kasuga K."/>
            <person name="Nojiri H."/>
            <person name="Yamane H."/>
            <person name="Omori T."/>
        </authorList>
    </citation>
    <scope>NUCLEOTIDE SEQUENCE [GENOMIC DNA]</scope>
    <scope>FUNCTION IN THE CARBAZOLE DEGRADATION</scope>
    <scope>SUBSTRATE SPECIFICITY</scope>
    <source>
        <strain>CA10</strain>
    </source>
</reference>
<reference key="3">
    <citation type="journal article" date="2001" name="J. Bacteriol.">
        <title>Genetic characterization and evolutionary implications of a car gene cluster in the carbazole degrader Pseudomonas sp. strain CA10.</title>
        <authorList>
            <person name="Nojiri H."/>
            <person name="Sekiguchi H."/>
            <person name="Maeda K."/>
            <person name="Urata M."/>
            <person name="Nakai S."/>
            <person name="Yoshida T."/>
            <person name="Habe H."/>
            <person name="Omori T."/>
        </authorList>
    </citation>
    <scope>NUCLEOTIDE SEQUENCE [GENOMIC DNA]</scope>
    <source>
        <strain>CA10</strain>
    </source>
</reference>
<reference key="4">
    <citation type="journal article" date="2003" name="J. Mol. Biol.">
        <title>Complete nucleotide sequence of carbazole/dioxin-degrading plasmid pCAR1 in Pseudomonas resinovorans strain CA10 indicates its mosaicity and the presence of large catabolic transposon Tn4676.</title>
        <authorList>
            <person name="Maeda K."/>
            <person name="Nojiri H."/>
            <person name="Shintani M."/>
            <person name="Yoshida T."/>
            <person name="Habe H."/>
            <person name="Omori T."/>
        </authorList>
    </citation>
    <scope>NUCLEOTIDE SEQUENCE [GENOMIC DNA]</scope>
    <source>
        <plasmid>pCAR1</plasmid>
    </source>
</reference>
<reference key="5">
    <citation type="journal article" date="2004" name="J. Bacteriol.">
        <title>Transcriptional regulation of the ant operon, encoding two-component anthranilate 1,2-dioxygenase, on the carbazole-degradative plasmid pCAR1 of Pseudomonas resinovorans strain CA10.</title>
        <authorList>
            <person name="Urata M."/>
            <person name="Miyakoshi M."/>
            <person name="Kai S."/>
            <person name="Maeda K."/>
            <person name="Habe H."/>
            <person name="Omori T."/>
            <person name="Yamane H."/>
            <person name="Nojiri H."/>
        </authorList>
    </citation>
    <scope>NUCLEOTIDE SEQUENCE [GENOMIC DNA]</scope>
    <source>
        <strain>CA10</strain>
        <plasmid>pCAR1</plasmid>
    </source>
</reference>
<reference key="6">
    <citation type="journal article" date="2006" name="Appl. Environ. Microbiol.">
        <title>Characterization of the replication, maintenance, and transfer features of the IncP-7 plasmid pCAR1, which carries genes involved in carbazole and dioxin degradation.</title>
        <authorList>
            <person name="Shintani M."/>
            <person name="Yano H."/>
            <person name="Habe H."/>
            <person name="Omori T."/>
            <person name="Yamane H."/>
            <person name="Tsuda M."/>
            <person name="Nojiri H."/>
        </authorList>
    </citation>
    <scope>NUCLEOTIDE SEQUENCE [GENOMIC DNA]</scope>
    <source>
        <plasmid>pCAR1</plasmid>
    </source>
</reference>
<reference key="7">
    <citation type="journal article" date="2007" name="J. Bacteriol.">
        <title>Transcriptome analysis of Pseudomonas putida KT2440 harboring the completely sequenced IncP-7 plasmid pCAR1.</title>
        <authorList>
            <person name="Miyakoshi M."/>
            <person name="Shintani M."/>
            <person name="Terabayashi T."/>
            <person name="Kai S."/>
            <person name="Yamane H."/>
            <person name="Nojiri H."/>
        </authorList>
    </citation>
    <scope>NUCLEOTIDE SEQUENCE [GENOMIC DNA]</scope>
    <source>
        <plasmid>pCAR1</plasmid>
    </source>
</reference>
<reference key="8">
    <citation type="journal article" date="2009" name="Appl. Environ. Microbiol.">
        <title>Carbazole-degradative IncP-7 plasmid pCAR1.2 is structurally unstable in Pseudomonas fluorescens Pf0-1, which accumulates catechol, the intermediate of the carbazole degradation pathway.</title>
        <authorList>
            <person name="Takahashi Y."/>
            <person name="Shintani M."/>
            <person name="Li L."/>
            <person name="Yamane H."/>
            <person name="Nojiri H."/>
        </authorList>
    </citation>
    <scope>NUCLEOTIDE SEQUENCE [GENOMIC DNA]</scope>
    <source>
        <plasmid>pCAR1</plasmid>
    </source>
</reference>
<reference key="9">
    <citation type="journal article" date="2009" name="Biosci. Biotechnol. Biochem.">
        <title>The complete nucleotide sequence of pCAR2: pCAR2 and pCAR1 were structurally identical IncP-7 carbazole degradative plasmids.</title>
        <authorList>
            <person name="Takahashi Y."/>
            <person name="Shintani M."/>
            <person name="Yamane H."/>
            <person name="Nojiri H."/>
        </authorList>
    </citation>
    <scope>NUCLEOTIDE SEQUENCE [GENOMIC DNA]</scope>
    <source>
        <plasmid>pCAR1</plasmid>
    </source>
</reference>
<reference key="10">
    <citation type="journal article" date="2009" name="BMC Genomics">
        <title>High-resolution mapping of plasmid transcriptomes in different host bacteria.</title>
        <authorList>
            <person name="Miyakoshi M."/>
            <person name="Nishida H."/>
            <person name="Shintani M."/>
            <person name="Yamane H."/>
            <person name="Nojiri H."/>
        </authorList>
    </citation>
    <scope>NUCLEOTIDE SEQUENCE [GENOMIC DNA]</scope>
    <source>
        <plasmid>pCAR1</plasmid>
    </source>
</reference>
<reference key="11">
    <citation type="journal article" date="2010" name="Environ. Microbiol.">
        <title>Response of the Pseudomonas host chromosomal transcriptome to carriage of the IncP-7 plasmid pCAR1.</title>
        <authorList>
            <person name="Shintani M."/>
            <person name="Takahashi Y."/>
            <person name="Tokumaru H."/>
            <person name="Kadota K."/>
            <person name="Hara H."/>
            <person name="Miyakoshi M."/>
            <person name="Naito K."/>
            <person name="Yamane H."/>
            <person name="Nishida H."/>
            <person name="Nojiri H."/>
        </authorList>
    </citation>
    <scope>NUCLEOTIDE SEQUENCE [GENOMIC DNA]</scope>
    <source>
        <plasmid>pCAR1</plasmid>
    </source>
</reference>
<reference key="12">
    <citation type="journal article" date="2010" name="J. Bacteriol.">
        <title>Pmr, a histone-like protein H1 (H-NS) family protein encoded by the IncP-7 plasmid pCAR1, is a key global regulator that alters host function.</title>
        <authorList>
            <person name="Yun C.S."/>
            <person name="Suzuki C."/>
            <person name="Naito K."/>
            <person name="Takeda T."/>
            <person name="Takahashi Y."/>
            <person name="Sai F."/>
            <person name="Terabayashi T."/>
            <person name="Miyakoshi M."/>
            <person name="Shintani M."/>
            <person name="Nishida H."/>
            <person name="Yamane H."/>
            <person name="Nojiri H."/>
        </authorList>
    </citation>
    <scope>NUCLEOTIDE SEQUENCE [GENOMIC DNA]</scope>
    <source>
        <plasmid>pCAR1</plasmid>
    </source>
</reference>
<reference key="13">
    <citation type="journal article" date="2002" name="Appl. Environ. Microbiol.">
        <title>Purification and characterization of carbazole 1,9a-dioxygenase, a three-component dioxygenase system of Pseudomonas resinovorans strain CA10.</title>
        <authorList>
            <person name="Nam J.W."/>
            <person name="Nojiri H."/>
            <person name="Noguchi H."/>
            <person name="Uchimura H."/>
            <person name="Yoshida T."/>
            <person name="Habe H."/>
            <person name="Yamane H."/>
            <person name="Omori T."/>
        </authorList>
    </citation>
    <scope>PROTEIN SEQUENCE OF 2-16</scope>
    <scope>FUNCTION AS A TERMINAL OXYGENASE</scope>
    <scope>CATALYTIC ACTIVITY</scope>
    <scope>BIOPHYSICOCHEMICAL PROPERTIES</scope>
    <scope>SUBUNIT</scope>
</reference>
<dbReference type="EC" id="1.14.12.22"/>
<dbReference type="EMBL" id="AB047548">
    <property type="protein sequence ID" value="BAB32765.1"/>
    <property type="molecule type" value="Genomic_DNA"/>
</dbReference>
<dbReference type="EMBL" id="AB047548">
    <property type="protein sequence ID" value="BAB32766.1"/>
    <property type="molecule type" value="Genomic_DNA"/>
</dbReference>
<dbReference type="EMBL" id="AB088420">
    <property type="protein sequence ID" value="BAC41544.1"/>
    <property type="molecule type" value="Genomic_DNA"/>
</dbReference>
<dbReference type="EMBL" id="AB088420">
    <property type="protein sequence ID" value="BAC41545.1"/>
    <property type="molecule type" value="Genomic_DNA"/>
</dbReference>
<dbReference type="RefSeq" id="NP_758566.1">
    <property type="nucleotide sequence ID" value="NC_004444.1"/>
</dbReference>
<dbReference type="SMR" id="Q8G8B6"/>
<dbReference type="GO" id="GO:0051537">
    <property type="term" value="F:2 iron, 2 sulfur cluster binding"/>
    <property type="evidence" value="ECO:0000314"/>
    <property type="project" value="UniProtKB"/>
</dbReference>
<dbReference type="GO" id="GO:0018564">
    <property type="term" value="F:carbazole 1,9a-dioxygenase [NAD(P)H] activity"/>
    <property type="evidence" value="ECO:0000314"/>
    <property type="project" value="UniProtKB"/>
</dbReference>
<dbReference type="GO" id="GO:0046872">
    <property type="term" value="F:metal ion binding"/>
    <property type="evidence" value="ECO:0007669"/>
    <property type="project" value="UniProtKB-KW"/>
</dbReference>
<dbReference type="GO" id="GO:0046232">
    <property type="term" value="P:carbazole catabolic process"/>
    <property type="evidence" value="ECO:0000314"/>
    <property type="project" value="UniProtKB"/>
</dbReference>
<dbReference type="CDD" id="cd08878">
    <property type="entry name" value="RHO_alpha_C_DMO-like"/>
    <property type="match status" value="1"/>
</dbReference>
<dbReference type="CDD" id="cd03548">
    <property type="entry name" value="Rieske_RO_Alpha_OMO_CARDO"/>
    <property type="match status" value="1"/>
</dbReference>
<dbReference type="FunFam" id="2.20.25.10:FF:000070">
    <property type="entry name" value="Terminal oxygenase component of carbazole"/>
    <property type="match status" value="1"/>
</dbReference>
<dbReference type="FunFam" id="3.90.380.10:FF:000015">
    <property type="entry name" value="Terminal oxygenase component of carbazole"/>
    <property type="match status" value="1"/>
</dbReference>
<dbReference type="Gene3D" id="2.20.25.10">
    <property type="match status" value="1"/>
</dbReference>
<dbReference type="Gene3D" id="2.20.25.680">
    <property type="match status" value="1"/>
</dbReference>
<dbReference type="Gene3D" id="3.90.380.10">
    <property type="entry name" value="Naphthalene 1,2-dioxygenase Alpha Subunit, Chain A, domain 1"/>
    <property type="match status" value="1"/>
</dbReference>
<dbReference type="InterPro" id="IPR050584">
    <property type="entry name" value="Cholesterol_7-desaturase"/>
</dbReference>
<dbReference type="InterPro" id="IPR021028">
    <property type="entry name" value="Homotrim_ring_OHase_catalytic"/>
</dbReference>
<dbReference type="InterPro" id="IPR017941">
    <property type="entry name" value="Rieske_2Fe-2S"/>
</dbReference>
<dbReference type="InterPro" id="IPR036922">
    <property type="entry name" value="Rieske_2Fe-2S_sf"/>
</dbReference>
<dbReference type="PANTHER" id="PTHR21266:SF59">
    <property type="entry name" value="BLR4922 PROTEIN"/>
    <property type="match status" value="1"/>
</dbReference>
<dbReference type="PANTHER" id="PTHR21266">
    <property type="entry name" value="IRON-SULFUR DOMAIN CONTAINING PROTEIN"/>
    <property type="match status" value="1"/>
</dbReference>
<dbReference type="Pfam" id="PF11723">
    <property type="entry name" value="Aromatic_hydrox"/>
    <property type="match status" value="1"/>
</dbReference>
<dbReference type="Pfam" id="PF00355">
    <property type="entry name" value="Rieske"/>
    <property type="match status" value="1"/>
</dbReference>
<dbReference type="SUPFAM" id="SSF55961">
    <property type="entry name" value="Bet v1-like"/>
    <property type="match status" value="1"/>
</dbReference>
<dbReference type="SUPFAM" id="SSF50022">
    <property type="entry name" value="ISP domain"/>
    <property type="match status" value="1"/>
</dbReference>
<dbReference type="PROSITE" id="PS51296">
    <property type="entry name" value="RIESKE"/>
    <property type="match status" value="1"/>
</dbReference>